<organism>
    <name type="scientific">Photorhabdus laumondii subsp. laumondii (strain DSM 15139 / CIP 105565 / TT01)</name>
    <name type="common">Photorhabdus luminescens subsp. laumondii</name>
    <dbReference type="NCBI Taxonomy" id="243265"/>
    <lineage>
        <taxon>Bacteria</taxon>
        <taxon>Pseudomonadati</taxon>
        <taxon>Pseudomonadota</taxon>
        <taxon>Gammaproteobacteria</taxon>
        <taxon>Enterobacterales</taxon>
        <taxon>Morganellaceae</taxon>
        <taxon>Photorhabdus</taxon>
    </lineage>
</organism>
<reference key="1">
    <citation type="journal article" date="2003" name="Nat. Biotechnol.">
        <title>The genome sequence of the entomopathogenic bacterium Photorhabdus luminescens.</title>
        <authorList>
            <person name="Duchaud E."/>
            <person name="Rusniok C."/>
            <person name="Frangeul L."/>
            <person name="Buchrieser C."/>
            <person name="Givaudan A."/>
            <person name="Taourit S."/>
            <person name="Bocs S."/>
            <person name="Boursaux-Eude C."/>
            <person name="Chandler M."/>
            <person name="Charles J.-F."/>
            <person name="Dassa E."/>
            <person name="Derose R."/>
            <person name="Derzelle S."/>
            <person name="Freyssinet G."/>
            <person name="Gaudriault S."/>
            <person name="Medigue C."/>
            <person name="Lanois A."/>
            <person name="Powell K."/>
            <person name="Siguier P."/>
            <person name="Vincent R."/>
            <person name="Wingate V."/>
            <person name="Zouine M."/>
            <person name="Glaser P."/>
            <person name="Boemare N."/>
            <person name="Danchin A."/>
            <person name="Kunst F."/>
        </authorList>
    </citation>
    <scope>NUCLEOTIDE SEQUENCE [LARGE SCALE GENOMIC DNA]</scope>
    <source>
        <strain>DSM 15139 / CIP 105565 / TT01</strain>
    </source>
</reference>
<keyword id="KW-0963">Cytoplasm</keyword>
<keyword id="KW-0227">DNA damage</keyword>
<keyword id="KW-0233">DNA recombination</keyword>
<keyword id="KW-0234">DNA repair</keyword>
<keyword id="KW-0238">DNA-binding</keyword>
<keyword id="KW-0255">Endonuclease</keyword>
<keyword id="KW-0378">Hydrolase</keyword>
<keyword id="KW-0460">Magnesium</keyword>
<keyword id="KW-0479">Metal-binding</keyword>
<keyword id="KW-0540">Nuclease</keyword>
<keyword id="KW-1185">Reference proteome</keyword>
<sequence>MAIILGIDPGSRVTGYGVIRQQGRHLSYLGSGCIRTKVDDLPNRLQRIYAGILEIITQFQPDAFAIEQVFMAKNADSALKLGQARGVAILAAVNQSIPVFEYAARQVKQTVVGTGAAEKSQVQHMVRSVLKLSANPQSDAADALAIAITHCHFNQNLLRVGDPRLILARGRLR</sequence>
<proteinExistence type="inferred from homology"/>
<comment type="function">
    <text evidence="1">The RuvA-RuvB-RuvC complex processes Holliday junction (HJ) DNA during genetic recombination and DNA repair. Endonuclease that resolves HJ intermediates. Cleaves cruciform DNA by making single-stranded nicks across the HJ at symmetrical positions within the homologous arms, yielding a 5'-phosphate and a 3'-hydroxyl group; requires a central core of homology in the junction. The consensus cleavage sequence is 5'-(A/T)TT(C/G)-3'. Cleavage occurs on the 3'-side of the TT dinucleotide at the point of strand exchange. HJ branch migration catalyzed by RuvA-RuvB allows RuvC to scan DNA until it finds its consensus sequence, where it cleaves and resolves the cruciform DNA.</text>
</comment>
<comment type="catalytic activity">
    <reaction evidence="1">
        <text>Endonucleolytic cleavage at a junction such as a reciprocal single-stranded crossover between two homologous DNA duplexes (Holliday junction).</text>
        <dbReference type="EC" id="3.1.21.10"/>
    </reaction>
</comment>
<comment type="cofactor">
    <cofactor evidence="1">
        <name>Mg(2+)</name>
        <dbReference type="ChEBI" id="CHEBI:18420"/>
    </cofactor>
    <text evidence="1">Binds 2 Mg(2+) ion per subunit.</text>
</comment>
<comment type="subunit">
    <text evidence="1">Homodimer which binds Holliday junction (HJ) DNA. The HJ becomes 2-fold symmetrical on binding to RuvC with unstacked arms; it has a different conformation from HJ DNA in complex with RuvA. In the full resolvosome a probable DNA-RuvA(4)-RuvB(12)-RuvC(2) complex forms which resolves the HJ.</text>
</comment>
<comment type="subcellular location">
    <subcellularLocation>
        <location evidence="1">Cytoplasm</location>
    </subcellularLocation>
</comment>
<comment type="similarity">
    <text evidence="1">Belongs to the RuvC family.</text>
</comment>
<gene>
    <name evidence="1" type="primary">ruvC</name>
    <name type="ordered locus">plu2110</name>
</gene>
<protein>
    <recommendedName>
        <fullName evidence="1">Crossover junction endodeoxyribonuclease RuvC</fullName>
        <ecNumber evidence="1">3.1.21.10</ecNumber>
    </recommendedName>
    <alternativeName>
        <fullName evidence="1">Holliday junction nuclease RuvC</fullName>
    </alternativeName>
    <alternativeName>
        <fullName evidence="1">Holliday junction resolvase RuvC</fullName>
    </alternativeName>
</protein>
<name>RUVC_PHOLL</name>
<dbReference type="EC" id="3.1.21.10" evidence="1"/>
<dbReference type="EMBL" id="BX571866">
    <property type="protein sequence ID" value="CAE14403.1"/>
    <property type="molecule type" value="Genomic_DNA"/>
</dbReference>
<dbReference type="RefSeq" id="WP_011146364.1">
    <property type="nucleotide sequence ID" value="NC_005126.1"/>
</dbReference>
<dbReference type="SMR" id="Q7N549"/>
<dbReference type="STRING" id="243265.plu2110"/>
<dbReference type="GeneID" id="48848389"/>
<dbReference type="KEGG" id="plu:plu2110"/>
<dbReference type="eggNOG" id="COG0817">
    <property type="taxonomic scope" value="Bacteria"/>
</dbReference>
<dbReference type="HOGENOM" id="CLU_091257_2_1_6"/>
<dbReference type="OrthoDB" id="9805499at2"/>
<dbReference type="Proteomes" id="UP000002514">
    <property type="component" value="Chromosome"/>
</dbReference>
<dbReference type="GO" id="GO:0005737">
    <property type="term" value="C:cytoplasm"/>
    <property type="evidence" value="ECO:0007669"/>
    <property type="project" value="UniProtKB-SubCell"/>
</dbReference>
<dbReference type="GO" id="GO:0048476">
    <property type="term" value="C:Holliday junction resolvase complex"/>
    <property type="evidence" value="ECO:0007669"/>
    <property type="project" value="UniProtKB-UniRule"/>
</dbReference>
<dbReference type="GO" id="GO:0008821">
    <property type="term" value="F:crossover junction DNA endonuclease activity"/>
    <property type="evidence" value="ECO:0007669"/>
    <property type="project" value="UniProtKB-UniRule"/>
</dbReference>
<dbReference type="GO" id="GO:0003677">
    <property type="term" value="F:DNA binding"/>
    <property type="evidence" value="ECO:0007669"/>
    <property type="project" value="UniProtKB-KW"/>
</dbReference>
<dbReference type="GO" id="GO:0000287">
    <property type="term" value="F:magnesium ion binding"/>
    <property type="evidence" value="ECO:0007669"/>
    <property type="project" value="UniProtKB-UniRule"/>
</dbReference>
<dbReference type="GO" id="GO:0006310">
    <property type="term" value="P:DNA recombination"/>
    <property type="evidence" value="ECO:0007669"/>
    <property type="project" value="UniProtKB-UniRule"/>
</dbReference>
<dbReference type="GO" id="GO:0006281">
    <property type="term" value="P:DNA repair"/>
    <property type="evidence" value="ECO:0007669"/>
    <property type="project" value="UniProtKB-UniRule"/>
</dbReference>
<dbReference type="CDD" id="cd16962">
    <property type="entry name" value="RuvC"/>
    <property type="match status" value="1"/>
</dbReference>
<dbReference type="FunFam" id="3.30.420.10:FF:000002">
    <property type="entry name" value="Crossover junction endodeoxyribonuclease RuvC"/>
    <property type="match status" value="1"/>
</dbReference>
<dbReference type="Gene3D" id="3.30.420.10">
    <property type="entry name" value="Ribonuclease H-like superfamily/Ribonuclease H"/>
    <property type="match status" value="1"/>
</dbReference>
<dbReference type="HAMAP" id="MF_00034">
    <property type="entry name" value="RuvC"/>
    <property type="match status" value="1"/>
</dbReference>
<dbReference type="InterPro" id="IPR012337">
    <property type="entry name" value="RNaseH-like_sf"/>
</dbReference>
<dbReference type="InterPro" id="IPR036397">
    <property type="entry name" value="RNaseH_sf"/>
</dbReference>
<dbReference type="InterPro" id="IPR020563">
    <property type="entry name" value="X-over_junc_endoDNase_Mg_BS"/>
</dbReference>
<dbReference type="InterPro" id="IPR002176">
    <property type="entry name" value="X-over_junc_endoDNase_RuvC"/>
</dbReference>
<dbReference type="NCBIfam" id="NF000711">
    <property type="entry name" value="PRK00039.2-1"/>
    <property type="match status" value="1"/>
</dbReference>
<dbReference type="NCBIfam" id="TIGR00228">
    <property type="entry name" value="ruvC"/>
    <property type="match status" value="1"/>
</dbReference>
<dbReference type="PANTHER" id="PTHR30194">
    <property type="entry name" value="CROSSOVER JUNCTION ENDODEOXYRIBONUCLEASE RUVC"/>
    <property type="match status" value="1"/>
</dbReference>
<dbReference type="PANTHER" id="PTHR30194:SF3">
    <property type="entry name" value="CROSSOVER JUNCTION ENDODEOXYRIBONUCLEASE RUVC"/>
    <property type="match status" value="1"/>
</dbReference>
<dbReference type="Pfam" id="PF02075">
    <property type="entry name" value="RuvC"/>
    <property type="match status" value="1"/>
</dbReference>
<dbReference type="PRINTS" id="PR00696">
    <property type="entry name" value="RSOLVASERUVC"/>
</dbReference>
<dbReference type="SUPFAM" id="SSF53098">
    <property type="entry name" value="Ribonuclease H-like"/>
    <property type="match status" value="1"/>
</dbReference>
<dbReference type="PROSITE" id="PS01321">
    <property type="entry name" value="RUVC"/>
    <property type="match status" value="1"/>
</dbReference>
<accession>Q7N549</accession>
<feature type="chain" id="PRO_0000183116" description="Crossover junction endodeoxyribonuclease RuvC">
    <location>
        <begin position="1"/>
        <end position="173"/>
    </location>
</feature>
<feature type="active site" evidence="1">
    <location>
        <position position="8"/>
    </location>
</feature>
<feature type="active site" evidence="1">
    <location>
        <position position="67"/>
    </location>
</feature>
<feature type="active site" evidence="1">
    <location>
        <position position="139"/>
    </location>
</feature>
<feature type="binding site" evidence="1">
    <location>
        <position position="8"/>
    </location>
    <ligand>
        <name>Mg(2+)</name>
        <dbReference type="ChEBI" id="CHEBI:18420"/>
        <label>1</label>
    </ligand>
</feature>
<feature type="binding site" evidence="1">
    <location>
        <position position="67"/>
    </location>
    <ligand>
        <name>Mg(2+)</name>
        <dbReference type="ChEBI" id="CHEBI:18420"/>
        <label>2</label>
    </ligand>
</feature>
<feature type="binding site" evidence="1">
    <location>
        <position position="139"/>
    </location>
    <ligand>
        <name>Mg(2+)</name>
        <dbReference type="ChEBI" id="CHEBI:18420"/>
        <label>1</label>
    </ligand>
</feature>
<evidence type="ECO:0000255" key="1">
    <source>
        <dbReference type="HAMAP-Rule" id="MF_00034"/>
    </source>
</evidence>